<dbReference type="EC" id="2.5.1.6" evidence="1"/>
<dbReference type="EMBL" id="CP000260">
    <property type="protein sequence ID" value="ABF34243.1"/>
    <property type="molecule type" value="Genomic_DNA"/>
</dbReference>
<dbReference type="SMR" id="Q1JGA1"/>
<dbReference type="KEGG" id="sph:MGAS10270_Spy1178"/>
<dbReference type="HOGENOM" id="CLU_041802_1_1_9"/>
<dbReference type="UniPathway" id="UPA00315">
    <property type="reaction ID" value="UER00080"/>
</dbReference>
<dbReference type="Proteomes" id="UP000002436">
    <property type="component" value="Chromosome"/>
</dbReference>
<dbReference type="GO" id="GO:0005737">
    <property type="term" value="C:cytoplasm"/>
    <property type="evidence" value="ECO:0007669"/>
    <property type="project" value="UniProtKB-SubCell"/>
</dbReference>
<dbReference type="GO" id="GO:0005524">
    <property type="term" value="F:ATP binding"/>
    <property type="evidence" value="ECO:0007669"/>
    <property type="project" value="UniProtKB-UniRule"/>
</dbReference>
<dbReference type="GO" id="GO:0000287">
    <property type="term" value="F:magnesium ion binding"/>
    <property type="evidence" value="ECO:0007669"/>
    <property type="project" value="UniProtKB-UniRule"/>
</dbReference>
<dbReference type="GO" id="GO:0004478">
    <property type="term" value="F:methionine adenosyltransferase activity"/>
    <property type="evidence" value="ECO:0007669"/>
    <property type="project" value="UniProtKB-UniRule"/>
</dbReference>
<dbReference type="GO" id="GO:0006730">
    <property type="term" value="P:one-carbon metabolic process"/>
    <property type="evidence" value="ECO:0007669"/>
    <property type="project" value="UniProtKB-KW"/>
</dbReference>
<dbReference type="GO" id="GO:0006556">
    <property type="term" value="P:S-adenosylmethionine biosynthetic process"/>
    <property type="evidence" value="ECO:0007669"/>
    <property type="project" value="UniProtKB-UniRule"/>
</dbReference>
<dbReference type="CDD" id="cd18079">
    <property type="entry name" value="S-AdoMet_synt"/>
    <property type="match status" value="1"/>
</dbReference>
<dbReference type="FunFam" id="3.30.300.10:FF:000003">
    <property type="entry name" value="S-adenosylmethionine synthase"/>
    <property type="match status" value="1"/>
</dbReference>
<dbReference type="Gene3D" id="3.30.300.10">
    <property type="match status" value="3"/>
</dbReference>
<dbReference type="HAMAP" id="MF_00086">
    <property type="entry name" value="S_AdoMet_synth1"/>
    <property type="match status" value="1"/>
</dbReference>
<dbReference type="InterPro" id="IPR022631">
    <property type="entry name" value="ADOMET_SYNTHASE_CS"/>
</dbReference>
<dbReference type="InterPro" id="IPR022630">
    <property type="entry name" value="S-AdoMet_synt_C"/>
</dbReference>
<dbReference type="InterPro" id="IPR022629">
    <property type="entry name" value="S-AdoMet_synt_central"/>
</dbReference>
<dbReference type="InterPro" id="IPR022628">
    <property type="entry name" value="S-AdoMet_synt_N"/>
</dbReference>
<dbReference type="InterPro" id="IPR002133">
    <property type="entry name" value="S-AdoMet_synthetase"/>
</dbReference>
<dbReference type="InterPro" id="IPR022636">
    <property type="entry name" value="S-AdoMet_synthetase_sfam"/>
</dbReference>
<dbReference type="NCBIfam" id="TIGR01034">
    <property type="entry name" value="metK"/>
    <property type="match status" value="1"/>
</dbReference>
<dbReference type="PANTHER" id="PTHR11964">
    <property type="entry name" value="S-ADENOSYLMETHIONINE SYNTHETASE"/>
    <property type="match status" value="1"/>
</dbReference>
<dbReference type="Pfam" id="PF02773">
    <property type="entry name" value="S-AdoMet_synt_C"/>
    <property type="match status" value="1"/>
</dbReference>
<dbReference type="Pfam" id="PF02772">
    <property type="entry name" value="S-AdoMet_synt_M"/>
    <property type="match status" value="1"/>
</dbReference>
<dbReference type="Pfam" id="PF00438">
    <property type="entry name" value="S-AdoMet_synt_N"/>
    <property type="match status" value="1"/>
</dbReference>
<dbReference type="PIRSF" id="PIRSF000497">
    <property type="entry name" value="MAT"/>
    <property type="match status" value="1"/>
</dbReference>
<dbReference type="SUPFAM" id="SSF55973">
    <property type="entry name" value="S-adenosylmethionine synthetase"/>
    <property type="match status" value="3"/>
</dbReference>
<dbReference type="PROSITE" id="PS00376">
    <property type="entry name" value="ADOMET_SYNTHASE_1"/>
    <property type="match status" value="1"/>
</dbReference>
<dbReference type="PROSITE" id="PS00377">
    <property type="entry name" value="ADOMET_SYNTHASE_2"/>
    <property type="match status" value="1"/>
</dbReference>
<gene>
    <name evidence="1" type="primary">metK</name>
    <name type="ordered locus">MGAS10270_Spy1178</name>
</gene>
<comment type="function">
    <text evidence="1">Catalyzes the formation of S-adenosylmethionine (AdoMet) from methionine and ATP. The overall synthetic reaction is composed of two sequential steps, AdoMet formation and the subsequent tripolyphosphate hydrolysis which occurs prior to release of AdoMet from the enzyme.</text>
</comment>
<comment type="catalytic activity">
    <reaction evidence="1">
        <text>L-methionine + ATP + H2O = S-adenosyl-L-methionine + phosphate + diphosphate</text>
        <dbReference type="Rhea" id="RHEA:21080"/>
        <dbReference type="ChEBI" id="CHEBI:15377"/>
        <dbReference type="ChEBI" id="CHEBI:30616"/>
        <dbReference type="ChEBI" id="CHEBI:33019"/>
        <dbReference type="ChEBI" id="CHEBI:43474"/>
        <dbReference type="ChEBI" id="CHEBI:57844"/>
        <dbReference type="ChEBI" id="CHEBI:59789"/>
        <dbReference type="EC" id="2.5.1.6"/>
    </reaction>
</comment>
<comment type="cofactor">
    <cofactor evidence="1">
        <name>Mg(2+)</name>
        <dbReference type="ChEBI" id="CHEBI:18420"/>
    </cofactor>
    <text evidence="1">Binds 2 divalent ions per subunit.</text>
</comment>
<comment type="cofactor">
    <cofactor evidence="1">
        <name>K(+)</name>
        <dbReference type="ChEBI" id="CHEBI:29103"/>
    </cofactor>
    <text evidence="1">Binds 1 potassium ion per subunit.</text>
</comment>
<comment type="pathway">
    <text evidence="1">Amino-acid biosynthesis; S-adenosyl-L-methionine biosynthesis; S-adenosyl-L-methionine from L-methionine: step 1/1.</text>
</comment>
<comment type="subunit">
    <text evidence="1">Homotetramer; dimer of dimers.</text>
</comment>
<comment type="subcellular location">
    <subcellularLocation>
        <location evidence="1">Cytoplasm</location>
    </subcellularLocation>
</comment>
<comment type="similarity">
    <text evidence="1">Belongs to the AdoMet synthase family.</text>
</comment>
<sequence length="398" mass="43078">MSERKLFTSESVSEGHPDKIADQISDAILDAILAEDPEAHVAAETCVYTGSVHVFGEISTTAYIDINRVVRDTIAEIGYTEAEYGFSAESVGVHPSLVEQSGDIAQGVNEALESREGDTDDLSHIGAGDQGLMFGFAINETPELMPLPISLSHQLVRRLAELRKSGEISYLRPDAKSQVTVEYDEHDKPVRVDTVVISTQHDPEATNDQICQDVIEKVIKAVIPADYLDDDTKFFINPTGRFVIGGPQGDSGLTGRKIIVDTYGGYSRHGGGAFSGKDATKVDRSASYAARYIAKNLVAAGLATKAEVQLAYAIGVAQPVSVRVDTFGTSTVPEAVLEAAVRQVFDLRPAGIIQMLDLKRPIYKQTAAYGHMGRTDIDLPWERLNKIDALVEAVKTVL</sequence>
<feature type="chain" id="PRO_0000302989" description="S-adenosylmethionine synthase">
    <location>
        <begin position="1"/>
        <end position="398"/>
    </location>
</feature>
<feature type="region of interest" description="Flexible loop" evidence="1">
    <location>
        <begin position="100"/>
        <end position="110"/>
    </location>
</feature>
<feature type="binding site" description="in other chain" evidence="1">
    <location>
        <position position="16"/>
    </location>
    <ligand>
        <name>ATP</name>
        <dbReference type="ChEBI" id="CHEBI:30616"/>
        <note>ligand shared between two neighboring subunits</note>
    </ligand>
</feature>
<feature type="binding site" evidence="1">
    <location>
        <position position="18"/>
    </location>
    <ligand>
        <name>Mg(2+)</name>
        <dbReference type="ChEBI" id="CHEBI:18420"/>
    </ligand>
</feature>
<feature type="binding site" evidence="1">
    <location>
        <position position="44"/>
    </location>
    <ligand>
        <name>K(+)</name>
        <dbReference type="ChEBI" id="CHEBI:29103"/>
    </ligand>
</feature>
<feature type="binding site" description="in other chain" evidence="1">
    <location>
        <position position="57"/>
    </location>
    <ligand>
        <name>L-methionine</name>
        <dbReference type="ChEBI" id="CHEBI:57844"/>
        <note>ligand shared between two neighboring subunits</note>
    </ligand>
</feature>
<feature type="binding site" description="in other chain" evidence="1">
    <location>
        <position position="100"/>
    </location>
    <ligand>
        <name>L-methionine</name>
        <dbReference type="ChEBI" id="CHEBI:57844"/>
        <note>ligand shared between two neighboring subunits</note>
    </ligand>
</feature>
<feature type="binding site" description="in other chain" evidence="1">
    <location>
        <begin position="174"/>
        <end position="176"/>
    </location>
    <ligand>
        <name>ATP</name>
        <dbReference type="ChEBI" id="CHEBI:30616"/>
        <note>ligand shared between two neighboring subunits</note>
    </ligand>
</feature>
<feature type="binding site" description="in other chain" evidence="1">
    <location>
        <begin position="241"/>
        <end position="242"/>
    </location>
    <ligand>
        <name>ATP</name>
        <dbReference type="ChEBI" id="CHEBI:30616"/>
        <note>ligand shared between two neighboring subunits</note>
    </ligand>
</feature>
<feature type="binding site" evidence="1">
    <location>
        <position position="250"/>
    </location>
    <ligand>
        <name>ATP</name>
        <dbReference type="ChEBI" id="CHEBI:30616"/>
        <note>ligand shared between two neighboring subunits</note>
    </ligand>
</feature>
<feature type="binding site" evidence="1">
    <location>
        <position position="250"/>
    </location>
    <ligand>
        <name>L-methionine</name>
        <dbReference type="ChEBI" id="CHEBI:57844"/>
        <note>ligand shared between two neighboring subunits</note>
    </ligand>
</feature>
<feature type="binding site" description="in other chain" evidence="1">
    <location>
        <begin position="256"/>
        <end position="257"/>
    </location>
    <ligand>
        <name>ATP</name>
        <dbReference type="ChEBI" id="CHEBI:30616"/>
        <note>ligand shared between two neighboring subunits</note>
    </ligand>
</feature>
<feature type="binding site" evidence="1">
    <location>
        <position position="273"/>
    </location>
    <ligand>
        <name>ATP</name>
        <dbReference type="ChEBI" id="CHEBI:30616"/>
        <note>ligand shared between two neighboring subunits</note>
    </ligand>
</feature>
<feature type="binding site" evidence="1">
    <location>
        <position position="277"/>
    </location>
    <ligand>
        <name>ATP</name>
        <dbReference type="ChEBI" id="CHEBI:30616"/>
        <note>ligand shared between two neighboring subunits</note>
    </ligand>
</feature>
<feature type="binding site" description="in other chain" evidence="1">
    <location>
        <position position="281"/>
    </location>
    <ligand>
        <name>L-methionine</name>
        <dbReference type="ChEBI" id="CHEBI:57844"/>
        <note>ligand shared between two neighboring subunits</note>
    </ligand>
</feature>
<proteinExistence type="inferred from homology"/>
<protein>
    <recommendedName>
        <fullName evidence="1">S-adenosylmethionine synthase</fullName>
        <shortName evidence="1">AdoMet synthase</shortName>
        <ecNumber evidence="1">2.5.1.6</ecNumber>
    </recommendedName>
    <alternativeName>
        <fullName evidence="1">MAT</fullName>
    </alternativeName>
    <alternativeName>
        <fullName evidence="1">Methionine adenosyltransferase</fullName>
    </alternativeName>
</protein>
<evidence type="ECO:0000255" key="1">
    <source>
        <dbReference type="HAMAP-Rule" id="MF_00086"/>
    </source>
</evidence>
<reference key="1">
    <citation type="journal article" date="2006" name="Proc. Natl. Acad. Sci. U.S.A.">
        <title>Molecular genetic anatomy of inter- and intraserotype variation in the human bacterial pathogen group A Streptococcus.</title>
        <authorList>
            <person name="Beres S.B."/>
            <person name="Richter E.W."/>
            <person name="Nagiec M.J."/>
            <person name="Sumby P."/>
            <person name="Porcella S.F."/>
            <person name="DeLeo F.R."/>
            <person name="Musser J.M."/>
        </authorList>
    </citation>
    <scope>NUCLEOTIDE SEQUENCE [LARGE SCALE GENOMIC DNA]</scope>
    <source>
        <strain>MGAS10270</strain>
    </source>
</reference>
<organism>
    <name type="scientific">Streptococcus pyogenes serotype M2 (strain MGAS10270)</name>
    <dbReference type="NCBI Taxonomy" id="370552"/>
    <lineage>
        <taxon>Bacteria</taxon>
        <taxon>Bacillati</taxon>
        <taxon>Bacillota</taxon>
        <taxon>Bacilli</taxon>
        <taxon>Lactobacillales</taxon>
        <taxon>Streptococcaceae</taxon>
        <taxon>Streptococcus</taxon>
    </lineage>
</organism>
<name>METK_STRPD</name>
<keyword id="KW-0067">ATP-binding</keyword>
<keyword id="KW-0963">Cytoplasm</keyword>
<keyword id="KW-0460">Magnesium</keyword>
<keyword id="KW-0479">Metal-binding</keyword>
<keyword id="KW-0547">Nucleotide-binding</keyword>
<keyword id="KW-0554">One-carbon metabolism</keyword>
<keyword id="KW-0630">Potassium</keyword>
<keyword id="KW-0808">Transferase</keyword>
<accession>Q1JGA1</accession>